<organism>
    <name type="scientific">Tropheryma whipplei (strain Twist)</name>
    <name type="common">Whipple's bacillus</name>
    <dbReference type="NCBI Taxonomy" id="203267"/>
    <lineage>
        <taxon>Bacteria</taxon>
        <taxon>Bacillati</taxon>
        <taxon>Actinomycetota</taxon>
        <taxon>Actinomycetes</taxon>
        <taxon>Micrococcales</taxon>
        <taxon>Tropherymataceae</taxon>
        <taxon>Tropheryma</taxon>
    </lineage>
</organism>
<protein>
    <recommendedName>
        <fullName evidence="1">GTPase Obg</fullName>
        <ecNumber evidence="1">3.6.5.-</ecNumber>
    </recommendedName>
    <alternativeName>
        <fullName evidence="1">GTP-binding protein Obg</fullName>
    </alternativeName>
</protein>
<keyword id="KW-0963">Cytoplasm</keyword>
<keyword id="KW-0342">GTP-binding</keyword>
<keyword id="KW-0378">Hydrolase</keyword>
<keyword id="KW-0460">Magnesium</keyword>
<keyword id="KW-0479">Metal-binding</keyword>
<keyword id="KW-0547">Nucleotide-binding</keyword>
<keyword id="KW-1185">Reference proteome</keyword>
<dbReference type="EC" id="3.6.5.-" evidence="1"/>
<dbReference type="EMBL" id="AE014184">
    <property type="protein sequence ID" value="AAO44568.1"/>
    <property type="molecule type" value="Genomic_DNA"/>
</dbReference>
<dbReference type="SMR" id="Q83MU8"/>
<dbReference type="STRING" id="203267.TWT_471"/>
<dbReference type="KEGG" id="twh:TWT_471"/>
<dbReference type="eggNOG" id="COG0536">
    <property type="taxonomic scope" value="Bacteria"/>
</dbReference>
<dbReference type="HOGENOM" id="CLU_011747_0_1_11"/>
<dbReference type="OrthoDB" id="9807318at2"/>
<dbReference type="Proteomes" id="UP000002200">
    <property type="component" value="Chromosome"/>
</dbReference>
<dbReference type="GO" id="GO:0005737">
    <property type="term" value="C:cytoplasm"/>
    <property type="evidence" value="ECO:0007669"/>
    <property type="project" value="UniProtKB-SubCell"/>
</dbReference>
<dbReference type="GO" id="GO:0005525">
    <property type="term" value="F:GTP binding"/>
    <property type="evidence" value="ECO:0007669"/>
    <property type="project" value="UniProtKB-UniRule"/>
</dbReference>
<dbReference type="GO" id="GO:0003924">
    <property type="term" value="F:GTPase activity"/>
    <property type="evidence" value="ECO:0007669"/>
    <property type="project" value="UniProtKB-UniRule"/>
</dbReference>
<dbReference type="GO" id="GO:0000287">
    <property type="term" value="F:magnesium ion binding"/>
    <property type="evidence" value="ECO:0007669"/>
    <property type="project" value="InterPro"/>
</dbReference>
<dbReference type="GO" id="GO:0042254">
    <property type="term" value="P:ribosome biogenesis"/>
    <property type="evidence" value="ECO:0007669"/>
    <property type="project" value="UniProtKB-UniRule"/>
</dbReference>
<dbReference type="CDD" id="cd01898">
    <property type="entry name" value="Obg"/>
    <property type="match status" value="1"/>
</dbReference>
<dbReference type="FunFam" id="2.70.210.12:FF:000001">
    <property type="entry name" value="GTPase Obg"/>
    <property type="match status" value="1"/>
</dbReference>
<dbReference type="Gene3D" id="3.30.300.350">
    <property type="entry name" value="GTP-binding protein OBG, C-terminal domain"/>
    <property type="match status" value="1"/>
</dbReference>
<dbReference type="Gene3D" id="2.70.210.12">
    <property type="entry name" value="GTP1/OBG domain"/>
    <property type="match status" value="1"/>
</dbReference>
<dbReference type="Gene3D" id="3.40.50.300">
    <property type="entry name" value="P-loop containing nucleotide triphosphate hydrolases"/>
    <property type="match status" value="1"/>
</dbReference>
<dbReference type="HAMAP" id="MF_01454">
    <property type="entry name" value="GTPase_Obg"/>
    <property type="match status" value="1"/>
</dbReference>
<dbReference type="InterPro" id="IPR031167">
    <property type="entry name" value="G_OBG"/>
</dbReference>
<dbReference type="InterPro" id="IPR006073">
    <property type="entry name" value="GTP-bd"/>
</dbReference>
<dbReference type="InterPro" id="IPR014100">
    <property type="entry name" value="GTP-bd_Obg/CgtA"/>
</dbReference>
<dbReference type="InterPro" id="IPR036346">
    <property type="entry name" value="GTP-bd_prot_GTP1/OBG_C_sf"/>
</dbReference>
<dbReference type="InterPro" id="IPR006074">
    <property type="entry name" value="GTP1-OBG_CS"/>
</dbReference>
<dbReference type="InterPro" id="IPR006169">
    <property type="entry name" value="GTP1_OBG_dom"/>
</dbReference>
<dbReference type="InterPro" id="IPR036726">
    <property type="entry name" value="GTP1_OBG_dom_sf"/>
</dbReference>
<dbReference type="InterPro" id="IPR045086">
    <property type="entry name" value="OBG_GTPase"/>
</dbReference>
<dbReference type="InterPro" id="IPR015349">
    <property type="entry name" value="OCT_dom"/>
</dbReference>
<dbReference type="InterPro" id="IPR027417">
    <property type="entry name" value="P-loop_NTPase"/>
</dbReference>
<dbReference type="NCBIfam" id="TIGR02729">
    <property type="entry name" value="Obg_CgtA"/>
    <property type="match status" value="1"/>
</dbReference>
<dbReference type="NCBIfam" id="TIGR03595">
    <property type="entry name" value="Obg_CgtA_exten"/>
    <property type="match status" value="1"/>
</dbReference>
<dbReference type="NCBIfam" id="NF008954">
    <property type="entry name" value="PRK12296.1"/>
    <property type="match status" value="1"/>
</dbReference>
<dbReference type="NCBIfam" id="NF008955">
    <property type="entry name" value="PRK12297.1"/>
    <property type="match status" value="1"/>
</dbReference>
<dbReference type="NCBIfam" id="NF008956">
    <property type="entry name" value="PRK12299.1"/>
    <property type="match status" value="1"/>
</dbReference>
<dbReference type="PANTHER" id="PTHR11702">
    <property type="entry name" value="DEVELOPMENTALLY REGULATED GTP-BINDING PROTEIN-RELATED"/>
    <property type="match status" value="1"/>
</dbReference>
<dbReference type="PANTHER" id="PTHR11702:SF31">
    <property type="entry name" value="MITOCHONDRIAL RIBOSOME-ASSOCIATED GTPASE 2"/>
    <property type="match status" value="1"/>
</dbReference>
<dbReference type="Pfam" id="PF09269">
    <property type="entry name" value="DUF1967"/>
    <property type="match status" value="1"/>
</dbReference>
<dbReference type="Pfam" id="PF01018">
    <property type="entry name" value="GTP1_OBG"/>
    <property type="match status" value="1"/>
</dbReference>
<dbReference type="Pfam" id="PF01926">
    <property type="entry name" value="MMR_HSR1"/>
    <property type="match status" value="1"/>
</dbReference>
<dbReference type="PRINTS" id="PR00326">
    <property type="entry name" value="GTP1OBG"/>
</dbReference>
<dbReference type="SUPFAM" id="SSF102741">
    <property type="entry name" value="Obg GTP-binding protein C-terminal domain"/>
    <property type="match status" value="1"/>
</dbReference>
<dbReference type="SUPFAM" id="SSF82051">
    <property type="entry name" value="Obg GTP-binding protein N-terminal domain"/>
    <property type="match status" value="1"/>
</dbReference>
<dbReference type="SUPFAM" id="SSF52540">
    <property type="entry name" value="P-loop containing nucleoside triphosphate hydrolases"/>
    <property type="match status" value="1"/>
</dbReference>
<dbReference type="PROSITE" id="PS51710">
    <property type="entry name" value="G_OBG"/>
    <property type="match status" value="1"/>
</dbReference>
<dbReference type="PROSITE" id="PS00905">
    <property type="entry name" value="GTP1_OBG"/>
    <property type="match status" value="1"/>
</dbReference>
<dbReference type="PROSITE" id="PS51883">
    <property type="entry name" value="OBG"/>
    <property type="match status" value="1"/>
</dbReference>
<dbReference type="PROSITE" id="PS51881">
    <property type="entry name" value="OCT"/>
    <property type="match status" value="1"/>
</dbReference>
<proteinExistence type="inferred from homology"/>
<accession>Q83MU8</accession>
<evidence type="ECO:0000255" key="1">
    <source>
        <dbReference type="HAMAP-Rule" id="MF_01454"/>
    </source>
</evidence>
<evidence type="ECO:0000255" key="2">
    <source>
        <dbReference type="PROSITE-ProRule" id="PRU01229"/>
    </source>
</evidence>
<evidence type="ECO:0000255" key="3">
    <source>
        <dbReference type="PROSITE-ProRule" id="PRU01231"/>
    </source>
</evidence>
<feature type="chain" id="PRO_0000386370" description="GTPase Obg">
    <location>
        <begin position="1"/>
        <end position="445"/>
    </location>
</feature>
<feature type="domain" description="Obg" evidence="3">
    <location>
        <begin position="7"/>
        <end position="164"/>
    </location>
</feature>
<feature type="domain" description="OBG-type G" evidence="1">
    <location>
        <begin position="165"/>
        <end position="342"/>
    </location>
</feature>
<feature type="domain" description="OCT" evidence="2">
    <location>
        <begin position="357"/>
        <end position="434"/>
    </location>
</feature>
<feature type="binding site" evidence="1">
    <location>
        <begin position="171"/>
        <end position="178"/>
    </location>
    <ligand>
        <name>GTP</name>
        <dbReference type="ChEBI" id="CHEBI:37565"/>
    </ligand>
</feature>
<feature type="binding site" evidence="1">
    <location>
        <position position="178"/>
    </location>
    <ligand>
        <name>Mg(2+)</name>
        <dbReference type="ChEBI" id="CHEBI:18420"/>
    </ligand>
</feature>
<feature type="binding site" evidence="1">
    <location>
        <begin position="196"/>
        <end position="200"/>
    </location>
    <ligand>
        <name>GTP</name>
        <dbReference type="ChEBI" id="CHEBI:37565"/>
    </ligand>
</feature>
<feature type="binding site" evidence="1">
    <location>
        <position position="198"/>
    </location>
    <ligand>
        <name>Mg(2+)</name>
        <dbReference type="ChEBI" id="CHEBI:18420"/>
    </ligand>
</feature>
<feature type="binding site" evidence="1">
    <location>
        <begin position="217"/>
        <end position="220"/>
    </location>
    <ligand>
        <name>GTP</name>
        <dbReference type="ChEBI" id="CHEBI:37565"/>
    </ligand>
</feature>
<feature type="binding site" evidence="1">
    <location>
        <begin position="291"/>
        <end position="294"/>
    </location>
    <ligand>
        <name>GTP</name>
        <dbReference type="ChEBI" id="CHEBI:37565"/>
    </ligand>
</feature>
<feature type="binding site" evidence="1">
    <location>
        <begin position="323"/>
        <end position="325"/>
    </location>
    <ligand>
        <name>GTP</name>
        <dbReference type="ChEBI" id="CHEBI:37565"/>
    </ligand>
</feature>
<gene>
    <name evidence="1" type="primary">obg</name>
    <name type="ordered locus">TWT_471</name>
</gene>
<comment type="function">
    <text evidence="1">An essential GTPase which binds GTP, GDP and possibly (p)ppGpp with moderate affinity, with high nucleotide exchange rates and a fairly low GTP hydrolysis rate. Plays a role in control of the cell cycle, stress response, ribosome biogenesis and in those bacteria that undergo differentiation, in morphogenesis control.</text>
</comment>
<comment type="cofactor">
    <cofactor evidence="1">
        <name>Mg(2+)</name>
        <dbReference type="ChEBI" id="CHEBI:18420"/>
    </cofactor>
</comment>
<comment type="subunit">
    <text evidence="1">Monomer.</text>
</comment>
<comment type="subcellular location">
    <subcellularLocation>
        <location evidence="1">Cytoplasm</location>
    </subcellularLocation>
</comment>
<comment type="similarity">
    <text evidence="1">Belongs to the TRAFAC class OBG-HflX-like GTPase superfamily. OBG GTPase family.</text>
</comment>
<name>OBG_TROWT</name>
<reference key="1">
    <citation type="journal article" date="2003" name="Genome Res.">
        <title>Tropheryma whipplei twist: a human pathogenic Actinobacteria with a reduced genome.</title>
        <authorList>
            <person name="Raoult D."/>
            <person name="Ogata H."/>
            <person name="Audic S."/>
            <person name="Robert C."/>
            <person name="Suhre K."/>
            <person name="Drancourt M."/>
            <person name="Claverie J.-M."/>
        </authorList>
    </citation>
    <scope>NUCLEOTIDE SEQUENCE [LARGE SCALE GENOMIC DNA]</scope>
    <source>
        <strain>Twist</strain>
    </source>
</reference>
<sequence>MSGITLPEFVDCVTVEFSAGRGGNGCASVRREKYKPLAGPDGGSGGHGGSIFLKADTSERTLISFRRKGHYSASNGAHGLSRLRNGARGKDLEVSVPCGTSVYDEGGRQIADLVSPGSCLQVVRGGTGGLGNAALAGYRRKTPRFALLGLPGQKRKLRLEVKSIADVALVGFPSVGKSSIISAISSAKPKIADYPFTTLHPNLGVVQSGPYRYTVADVPGLVEGASKGIGLGLNFLRHIERCSVVVHVIDCANTQQDPISGFNLIEKELSEYKVAENAIPLNKRPKVIVLNKIDVLQTKEEQDTLLYLQSVFKKLVTDVYAISAVTRSGLRQFTLRLGEICQEYPSQVQPTSQTILIPAKNTPEFSLDRTDGVYRVTGKKPEKWILQTDFSSDEAISYLAERLDRLGIEDALVRAGATCGDEVEIGGVIFTWDPSVANTSFSLSV</sequence>